<evidence type="ECO:0000250" key="1"/>
<evidence type="ECO:0000250" key="2">
    <source>
        <dbReference type="UniProtKB" id="O95751"/>
    </source>
</evidence>
<evidence type="ECO:0000305" key="3"/>
<keyword id="KW-0539">Nucleus</keyword>
<keyword id="KW-1185">Reference proteome</keyword>
<gene>
    <name type="primary">LDOC1</name>
</gene>
<name>LDOC1_PANPA</name>
<accession>Q6SEH4</accession>
<proteinExistence type="inferred from homology"/>
<organism>
    <name type="scientific">Pan paniscus</name>
    <name type="common">Pygmy chimpanzee</name>
    <name type="synonym">Bonobo</name>
    <dbReference type="NCBI Taxonomy" id="9597"/>
    <lineage>
        <taxon>Eukaryota</taxon>
        <taxon>Metazoa</taxon>
        <taxon>Chordata</taxon>
        <taxon>Craniata</taxon>
        <taxon>Vertebrata</taxon>
        <taxon>Euteleostomi</taxon>
        <taxon>Mammalia</taxon>
        <taxon>Eutheria</taxon>
        <taxon>Euarchontoglires</taxon>
        <taxon>Primates</taxon>
        <taxon>Haplorrhini</taxon>
        <taxon>Catarrhini</taxon>
        <taxon>Hominidae</taxon>
        <taxon>Pan</taxon>
    </lineage>
</organism>
<sequence length="146" mass="16954">MVDELVLLLHALLMRHRALSIENSQLMEQLRLLVCERASLLRQVRPPSCPVPFPETFNGESSRLPEFIVQTASYMLVNENRFCNDAMKVAFLISLLTGEAEEWVVPYIEMDSPILGDYRAFLDEMKQCFGWDDDEDDDDDEEEDDY</sequence>
<reference key="1">
    <citation type="journal article" date="2004" name="Proc. Natl. Acad. Sci. U.S.A.">
        <title>The SPANX gene family of cancer/testis-specific antigens: rapid evolution and amplification in African great apes and hominids.</title>
        <authorList>
            <person name="Kouprina N."/>
            <person name="Mullokandov M."/>
            <person name="Rogozin I.B."/>
            <person name="Collins N.K."/>
            <person name="Solomon G."/>
            <person name="Otstot J."/>
            <person name="Risinger J.I."/>
            <person name="Koonin E.V."/>
            <person name="Barrett J.C."/>
            <person name="Larionov V."/>
        </authorList>
    </citation>
    <scope>NUCLEOTIDE SEQUENCE [GENOMIC DNA]</scope>
</reference>
<dbReference type="EMBL" id="AY459388">
    <property type="protein sequence ID" value="AAS15729.1"/>
    <property type="molecule type" value="Genomic_DNA"/>
</dbReference>
<dbReference type="RefSeq" id="XP_003804614.1">
    <property type="nucleotide sequence ID" value="XM_003804566.5"/>
</dbReference>
<dbReference type="SMR" id="Q6SEH4"/>
<dbReference type="GeneID" id="100969658"/>
<dbReference type="KEGG" id="pps:100969658"/>
<dbReference type="CTD" id="23641"/>
<dbReference type="eggNOG" id="ENOG502T19P">
    <property type="taxonomic scope" value="Eukaryota"/>
</dbReference>
<dbReference type="OrthoDB" id="13386at9604"/>
<dbReference type="Proteomes" id="UP000240080">
    <property type="component" value="Unplaced"/>
</dbReference>
<dbReference type="GO" id="GO:0005634">
    <property type="term" value="C:nucleus"/>
    <property type="evidence" value="ECO:0007669"/>
    <property type="project" value="UniProtKB-SubCell"/>
</dbReference>
<dbReference type="GO" id="GO:0071222">
    <property type="term" value="P:cellular response to lipopolysaccharide"/>
    <property type="evidence" value="ECO:0000250"/>
    <property type="project" value="UniProtKB"/>
</dbReference>
<dbReference type="GO" id="GO:0071225">
    <property type="term" value="P:cellular response to muramyl dipeptide"/>
    <property type="evidence" value="ECO:0000250"/>
    <property type="project" value="UniProtKB"/>
</dbReference>
<dbReference type="InterPro" id="IPR032549">
    <property type="entry name" value="DUF4939"/>
</dbReference>
<dbReference type="Pfam" id="PF16297">
    <property type="entry name" value="DUF4939"/>
    <property type="match status" value="1"/>
</dbReference>
<comment type="function">
    <text evidence="1">May have an important role in the development and/or progression of some cancers.</text>
</comment>
<comment type="subunit">
    <text evidence="2">Interacts with NOD2.</text>
</comment>
<comment type="subcellular location">
    <subcellularLocation>
        <location evidence="1">Nucleus</location>
    </subcellularLocation>
</comment>
<comment type="similarity">
    <text evidence="3">Belongs to the LDOC1 family.</text>
</comment>
<feature type="chain" id="PRO_0000084393" description="Protein LDOC1">
    <location>
        <begin position="1"/>
        <end position="146"/>
    </location>
</feature>
<protein>
    <recommendedName>
        <fullName>Protein LDOC1</fullName>
    </recommendedName>
</protein>